<sequence>MASENMTPQEYIGHHLNNLQLDLRTFSLVDPQNPPATFWTLNIDSMFFSVVLGLLFLVMFRSVAKKATSGVPGKFQTAIELIVGFVHGSVKDMYHGKSKLIAPLALTIFVWVFLMNLMDLLPIDLLPYIAEHWLGLPATRVVPSADVNITLSMALGVFILILFYSIKMKGIGGFAKELTLQPFNHWAFIPVNLILEGVSLLSKPVSLGLRLFGNMYAGELIFILIAGLLPWWSQWILNVPWAIFHILIITLQAFIFMVLTIVYLSMASEEH</sequence>
<keyword id="KW-0066">ATP synthesis</keyword>
<keyword id="KW-0997">Cell inner membrane</keyword>
<keyword id="KW-1003">Cell membrane</keyword>
<keyword id="KW-0138">CF(0)</keyword>
<keyword id="KW-0375">Hydrogen ion transport</keyword>
<keyword id="KW-0406">Ion transport</keyword>
<keyword id="KW-0472">Membrane</keyword>
<keyword id="KW-0812">Transmembrane</keyword>
<keyword id="KW-1133">Transmembrane helix</keyword>
<keyword id="KW-0813">Transport</keyword>
<protein>
    <recommendedName>
        <fullName evidence="1">ATP synthase subunit a</fullName>
    </recommendedName>
    <alternativeName>
        <fullName evidence="1">ATP synthase F0 sector subunit a</fullName>
    </alternativeName>
    <alternativeName>
        <fullName evidence="1">F-ATPase subunit 6</fullName>
    </alternativeName>
</protein>
<gene>
    <name evidence="1" type="primary">atpB</name>
    <name type="ordered locus">SSPA3465</name>
</gene>
<feature type="chain" id="PRO_0000362441" description="ATP synthase subunit a">
    <location>
        <begin position="1"/>
        <end position="271"/>
    </location>
</feature>
<feature type="transmembrane region" description="Helical" evidence="1">
    <location>
        <begin position="38"/>
        <end position="58"/>
    </location>
</feature>
<feature type="transmembrane region" description="Helical" evidence="1">
    <location>
        <begin position="100"/>
        <end position="120"/>
    </location>
</feature>
<feature type="transmembrane region" description="Helical" evidence="1">
    <location>
        <begin position="146"/>
        <end position="166"/>
    </location>
</feature>
<feature type="transmembrane region" description="Helical" evidence="1">
    <location>
        <begin position="220"/>
        <end position="240"/>
    </location>
</feature>
<feature type="transmembrane region" description="Helical" evidence="1">
    <location>
        <begin position="242"/>
        <end position="262"/>
    </location>
</feature>
<comment type="function">
    <text evidence="1">Key component of the proton channel; it plays a direct role in the translocation of protons across the membrane.</text>
</comment>
<comment type="subunit">
    <text evidence="1">F-type ATPases have 2 components, CF(1) - the catalytic core - and CF(0) - the membrane proton channel. CF(1) has five subunits: alpha(3), beta(3), gamma(1), delta(1), epsilon(1). CF(0) has three main subunits: a(1), b(2) and c(9-12). The alpha and beta chains form an alternating ring which encloses part of the gamma chain. CF(1) is attached to CF(0) by a central stalk formed by the gamma and epsilon chains, while a peripheral stalk is formed by the delta and b chains.</text>
</comment>
<comment type="subcellular location">
    <subcellularLocation>
        <location evidence="1">Cell inner membrane</location>
        <topology evidence="1">Multi-pass membrane protein</topology>
    </subcellularLocation>
</comment>
<comment type="similarity">
    <text evidence="1">Belongs to the ATPase A chain family.</text>
</comment>
<organism>
    <name type="scientific">Salmonella paratyphi A (strain AKU_12601)</name>
    <dbReference type="NCBI Taxonomy" id="554290"/>
    <lineage>
        <taxon>Bacteria</taxon>
        <taxon>Pseudomonadati</taxon>
        <taxon>Pseudomonadota</taxon>
        <taxon>Gammaproteobacteria</taxon>
        <taxon>Enterobacterales</taxon>
        <taxon>Enterobacteriaceae</taxon>
        <taxon>Salmonella</taxon>
    </lineage>
</organism>
<dbReference type="EMBL" id="FM200053">
    <property type="protein sequence ID" value="CAR61740.1"/>
    <property type="molecule type" value="Genomic_DNA"/>
</dbReference>
<dbReference type="RefSeq" id="WP_000135632.1">
    <property type="nucleotide sequence ID" value="NC_011147.1"/>
</dbReference>
<dbReference type="SMR" id="B5BIP2"/>
<dbReference type="KEGG" id="sek:SSPA3465"/>
<dbReference type="HOGENOM" id="CLU_041018_1_0_6"/>
<dbReference type="Proteomes" id="UP000001869">
    <property type="component" value="Chromosome"/>
</dbReference>
<dbReference type="GO" id="GO:0005886">
    <property type="term" value="C:plasma membrane"/>
    <property type="evidence" value="ECO:0007669"/>
    <property type="project" value="UniProtKB-SubCell"/>
</dbReference>
<dbReference type="GO" id="GO:0045259">
    <property type="term" value="C:proton-transporting ATP synthase complex"/>
    <property type="evidence" value="ECO:0007669"/>
    <property type="project" value="UniProtKB-KW"/>
</dbReference>
<dbReference type="GO" id="GO:0046933">
    <property type="term" value="F:proton-transporting ATP synthase activity, rotational mechanism"/>
    <property type="evidence" value="ECO:0007669"/>
    <property type="project" value="UniProtKB-UniRule"/>
</dbReference>
<dbReference type="GO" id="GO:0042777">
    <property type="term" value="P:proton motive force-driven plasma membrane ATP synthesis"/>
    <property type="evidence" value="ECO:0007669"/>
    <property type="project" value="TreeGrafter"/>
</dbReference>
<dbReference type="CDD" id="cd00310">
    <property type="entry name" value="ATP-synt_Fo_a_6"/>
    <property type="match status" value="1"/>
</dbReference>
<dbReference type="FunFam" id="1.20.120.220:FF:000002">
    <property type="entry name" value="ATP synthase subunit a"/>
    <property type="match status" value="1"/>
</dbReference>
<dbReference type="Gene3D" id="1.20.120.220">
    <property type="entry name" value="ATP synthase, F0 complex, subunit A"/>
    <property type="match status" value="1"/>
</dbReference>
<dbReference type="HAMAP" id="MF_01393">
    <property type="entry name" value="ATP_synth_a_bact"/>
    <property type="match status" value="1"/>
</dbReference>
<dbReference type="InterPro" id="IPR045082">
    <property type="entry name" value="ATP_syn_F0_a_bact/chloroplast"/>
</dbReference>
<dbReference type="InterPro" id="IPR000568">
    <property type="entry name" value="ATP_synth_F0_asu"/>
</dbReference>
<dbReference type="InterPro" id="IPR023011">
    <property type="entry name" value="ATP_synth_F0_asu_AS"/>
</dbReference>
<dbReference type="InterPro" id="IPR035908">
    <property type="entry name" value="F0_ATP_A_sf"/>
</dbReference>
<dbReference type="NCBIfam" id="TIGR01131">
    <property type="entry name" value="ATP_synt_6_or_A"/>
    <property type="match status" value="1"/>
</dbReference>
<dbReference type="NCBIfam" id="NF004477">
    <property type="entry name" value="PRK05815.1-1"/>
    <property type="match status" value="1"/>
</dbReference>
<dbReference type="PANTHER" id="PTHR42823">
    <property type="entry name" value="ATP SYNTHASE SUBUNIT A, CHLOROPLASTIC"/>
    <property type="match status" value="1"/>
</dbReference>
<dbReference type="PANTHER" id="PTHR42823:SF3">
    <property type="entry name" value="ATP SYNTHASE SUBUNIT A, CHLOROPLASTIC"/>
    <property type="match status" value="1"/>
</dbReference>
<dbReference type="Pfam" id="PF00119">
    <property type="entry name" value="ATP-synt_A"/>
    <property type="match status" value="1"/>
</dbReference>
<dbReference type="PRINTS" id="PR00123">
    <property type="entry name" value="ATPASEA"/>
</dbReference>
<dbReference type="SUPFAM" id="SSF81336">
    <property type="entry name" value="F1F0 ATP synthase subunit A"/>
    <property type="match status" value="1"/>
</dbReference>
<dbReference type="PROSITE" id="PS00449">
    <property type="entry name" value="ATPASE_A"/>
    <property type="match status" value="1"/>
</dbReference>
<proteinExistence type="inferred from homology"/>
<name>ATP6_SALPK</name>
<reference key="1">
    <citation type="journal article" date="2009" name="BMC Genomics">
        <title>Pseudogene accumulation in the evolutionary histories of Salmonella enterica serovars Paratyphi A and Typhi.</title>
        <authorList>
            <person name="Holt K.E."/>
            <person name="Thomson N.R."/>
            <person name="Wain J."/>
            <person name="Langridge G.C."/>
            <person name="Hasan R."/>
            <person name="Bhutta Z.A."/>
            <person name="Quail M.A."/>
            <person name="Norbertczak H."/>
            <person name="Walker D."/>
            <person name="Simmonds M."/>
            <person name="White B."/>
            <person name="Bason N."/>
            <person name="Mungall K."/>
            <person name="Dougan G."/>
            <person name="Parkhill J."/>
        </authorList>
    </citation>
    <scope>NUCLEOTIDE SEQUENCE [LARGE SCALE GENOMIC DNA]</scope>
    <source>
        <strain>AKU_12601</strain>
    </source>
</reference>
<evidence type="ECO:0000255" key="1">
    <source>
        <dbReference type="HAMAP-Rule" id="MF_01393"/>
    </source>
</evidence>
<accession>B5BIP2</accession>